<dbReference type="EC" id="3.5.99.2" evidence="2"/>
<dbReference type="EMBL" id="CP000046">
    <property type="protein sequence ID" value="AAW37048.1"/>
    <property type="molecule type" value="Genomic_DNA"/>
</dbReference>
<dbReference type="RefSeq" id="WP_000396077.1">
    <property type="nucleotide sequence ID" value="NZ_JBGOFO010000007.1"/>
</dbReference>
<dbReference type="SMR" id="Q5HEA5"/>
<dbReference type="KEGG" id="sac:SACOL2086"/>
<dbReference type="HOGENOM" id="CLU_077537_3_1_9"/>
<dbReference type="UniPathway" id="UPA00060"/>
<dbReference type="Proteomes" id="UP000000530">
    <property type="component" value="Chromosome"/>
</dbReference>
<dbReference type="GO" id="GO:0005829">
    <property type="term" value="C:cytosol"/>
    <property type="evidence" value="ECO:0007669"/>
    <property type="project" value="TreeGrafter"/>
</dbReference>
<dbReference type="GO" id="GO:0050334">
    <property type="term" value="F:thiaminase activity"/>
    <property type="evidence" value="ECO:0007669"/>
    <property type="project" value="UniProtKB-EC"/>
</dbReference>
<dbReference type="GO" id="GO:0009228">
    <property type="term" value="P:thiamine biosynthetic process"/>
    <property type="evidence" value="ECO:0007669"/>
    <property type="project" value="UniProtKB-KW"/>
</dbReference>
<dbReference type="GO" id="GO:0009229">
    <property type="term" value="P:thiamine diphosphate biosynthetic process"/>
    <property type="evidence" value="ECO:0007669"/>
    <property type="project" value="UniProtKB-UniPathway"/>
</dbReference>
<dbReference type="CDD" id="cd19360">
    <property type="entry name" value="TenA_C_SaTenA-like"/>
    <property type="match status" value="1"/>
</dbReference>
<dbReference type="FunFam" id="1.20.910.10:FF:000010">
    <property type="entry name" value="Aminopyrimidine aminohydrolase"/>
    <property type="match status" value="1"/>
</dbReference>
<dbReference type="Gene3D" id="1.20.910.10">
    <property type="entry name" value="Heme oxygenase-like"/>
    <property type="match status" value="1"/>
</dbReference>
<dbReference type="InterPro" id="IPR016084">
    <property type="entry name" value="Haem_Oase-like_multi-hlx"/>
</dbReference>
<dbReference type="InterPro" id="IPR004305">
    <property type="entry name" value="Thiaminase-2/PQQC"/>
</dbReference>
<dbReference type="InterPro" id="IPR027574">
    <property type="entry name" value="Thiaminase_II"/>
</dbReference>
<dbReference type="InterPro" id="IPR050967">
    <property type="entry name" value="Thiamine_Salvage_TenA"/>
</dbReference>
<dbReference type="NCBIfam" id="TIGR04306">
    <property type="entry name" value="salvage_TenA"/>
    <property type="match status" value="1"/>
</dbReference>
<dbReference type="PANTHER" id="PTHR43198">
    <property type="entry name" value="BIFUNCTIONAL TH2 PROTEIN"/>
    <property type="match status" value="1"/>
</dbReference>
<dbReference type="PANTHER" id="PTHR43198:SF2">
    <property type="entry name" value="SI:CH1073-67J19.1-RELATED"/>
    <property type="match status" value="1"/>
</dbReference>
<dbReference type="Pfam" id="PF03070">
    <property type="entry name" value="TENA_THI-4"/>
    <property type="match status" value="1"/>
</dbReference>
<dbReference type="SUPFAM" id="SSF48613">
    <property type="entry name" value="Heme oxygenase-like"/>
    <property type="match status" value="1"/>
</dbReference>
<comment type="function">
    <text evidence="1 2">Catalyzes an amino-pyrimidine hydrolysis reaction at the C5' of the pyrimidine moiety of thiamine compounds, a reaction that is part of a thiamine salvage pathway. Thus, catalyzes the conversion of 4-amino-5-aminomethyl-2-methylpyrimidine to 4-amino-5-hydroxymethyl-2-methylpyrimidine (HMP). Is also able to catalyze the hydrolytic cleavage of thiamine; however, this thiaminase activity may not be physiologically relevant. Therefore, is probably involved in the regeneration of the thiamine pyrimidine from thiamine degraded products present in the environment, rather than in thiamine degradation.</text>
</comment>
<comment type="catalytic activity">
    <reaction evidence="1">
        <text>4-amino-5-aminomethyl-2-methylpyrimidine + H2O = 4-amino-5-hydroxymethyl-2-methylpyrimidine + NH4(+)</text>
        <dbReference type="Rhea" id="RHEA:31799"/>
        <dbReference type="ChEBI" id="CHEBI:15377"/>
        <dbReference type="ChEBI" id="CHEBI:16892"/>
        <dbReference type="ChEBI" id="CHEBI:28938"/>
        <dbReference type="ChEBI" id="CHEBI:63416"/>
        <dbReference type="EC" id="3.5.99.2"/>
    </reaction>
</comment>
<comment type="catalytic activity">
    <reaction evidence="2">
        <text>thiamine + H2O = 5-(2-hydroxyethyl)-4-methylthiazole + 4-amino-5-hydroxymethyl-2-methylpyrimidine + H(+)</text>
        <dbReference type="Rhea" id="RHEA:17509"/>
        <dbReference type="ChEBI" id="CHEBI:15377"/>
        <dbReference type="ChEBI" id="CHEBI:15378"/>
        <dbReference type="ChEBI" id="CHEBI:16892"/>
        <dbReference type="ChEBI" id="CHEBI:17957"/>
        <dbReference type="ChEBI" id="CHEBI:18385"/>
        <dbReference type="EC" id="3.5.99.2"/>
    </reaction>
</comment>
<comment type="pathway">
    <text evidence="1">Cofactor biosynthesis; thiamine diphosphate biosynthesis.</text>
</comment>
<comment type="subunit">
    <text evidence="2">Homotetramer.</text>
</comment>
<comment type="similarity">
    <text evidence="3">Belongs to the TenA family.</text>
</comment>
<gene>
    <name type="primary">tenA</name>
    <name type="ordered locus">SACOL2086</name>
</gene>
<feature type="chain" id="PRO_0000293606" description="Aminopyrimidine aminohydrolase">
    <location>
        <begin position="1"/>
        <end position="229"/>
    </location>
</feature>
<feature type="active site" description="Nucleophile" evidence="1">
    <location>
        <position position="137"/>
    </location>
</feature>
<feature type="active site" description="Proton donor" evidence="1">
    <location>
        <position position="208"/>
    </location>
</feature>
<feature type="binding site" evidence="1">
    <location>
        <position position="44"/>
    </location>
    <ligand>
        <name>substrate</name>
    </ligand>
</feature>
<feature type="binding site" evidence="1">
    <location>
        <position position="141"/>
    </location>
    <ligand>
        <name>substrate</name>
    </ligand>
</feature>
<feature type="binding site" evidence="1">
    <location>
        <position position="167"/>
    </location>
    <ligand>
        <name>substrate</name>
    </ligand>
</feature>
<feature type="site" description="Increases nucleophilicity of active site Cys" evidence="1">
    <location>
        <position position="47"/>
    </location>
</feature>
<sequence length="229" mass="26729">MEFSQKLYQAAKPIINDIYEDDFIQKMLSGDIGADALRHYLKADAAYLKEFTNLYALLIPKMNSMNDVKFLVEQIEFMVEGEVLAHDILAQIVGESYEEIIKTKVWPPSGDHYIKHMYFQAHSRENAIYTIAAMAPCPYIYAELAKRSQSDHKLNREKDTAKWFDFYSTEMDDIINVFEALMNKLAESMSDKELEQVKQVFLESCIHERRFFNMAMTLEQWEFGGKVND</sequence>
<name>TENA_STAAC</name>
<organism>
    <name type="scientific">Staphylococcus aureus (strain COL)</name>
    <dbReference type="NCBI Taxonomy" id="93062"/>
    <lineage>
        <taxon>Bacteria</taxon>
        <taxon>Bacillati</taxon>
        <taxon>Bacillota</taxon>
        <taxon>Bacilli</taxon>
        <taxon>Bacillales</taxon>
        <taxon>Staphylococcaceae</taxon>
        <taxon>Staphylococcus</taxon>
    </lineage>
</organism>
<protein>
    <recommendedName>
        <fullName evidence="1">Aminopyrimidine aminohydrolase</fullName>
        <ecNumber evidence="2">3.5.99.2</ecNumber>
    </recommendedName>
    <alternativeName>
        <fullName evidence="2">Thiaminase II</fullName>
    </alternativeName>
</protein>
<evidence type="ECO:0000250" key="1">
    <source>
        <dbReference type="UniProtKB" id="P25052"/>
    </source>
</evidence>
<evidence type="ECO:0000250" key="2">
    <source>
        <dbReference type="UniProtKB" id="Q6GEY1"/>
    </source>
</evidence>
<evidence type="ECO:0000305" key="3"/>
<proteinExistence type="inferred from homology"/>
<accession>Q5HEA5</accession>
<keyword id="KW-0378">Hydrolase</keyword>
<keyword id="KW-0784">Thiamine biosynthesis</keyword>
<reference key="1">
    <citation type="journal article" date="2005" name="J. Bacteriol.">
        <title>Insights on evolution of virulence and resistance from the complete genome analysis of an early methicillin-resistant Staphylococcus aureus strain and a biofilm-producing methicillin-resistant Staphylococcus epidermidis strain.</title>
        <authorList>
            <person name="Gill S.R."/>
            <person name="Fouts D.E."/>
            <person name="Archer G.L."/>
            <person name="Mongodin E.F."/>
            <person name="DeBoy R.T."/>
            <person name="Ravel J."/>
            <person name="Paulsen I.T."/>
            <person name="Kolonay J.F."/>
            <person name="Brinkac L.M."/>
            <person name="Beanan M.J."/>
            <person name="Dodson R.J."/>
            <person name="Daugherty S.C."/>
            <person name="Madupu R."/>
            <person name="Angiuoli S.V."/>
            <person name="Durkin A.S."/>
            <person name="Haft D.H."/>
            <person name="Vamathevan J.J."/>
            <person name="Khouri H."/>
            <person name="Utterback T.R."/>
            <person name="Lee C."/>
            <person name="Dimitrov G."/>
            <person name="Jiang L."/>
            <person name="Qin H."/>
            <person name="Weidman J."/>
            <person name="Tran K."/>
            <person name="Kang K.H."/>
            <person name="Hance I.R."/>
            <person name="Nelson K.E."/>
            <person name="Fraser C.M."/>
        </authorList>
    </citation>
    <scope>NUCLEOTIDE SEQUENCE [LARGE SCALE GENOMIC DNA]</scope>
    <source>
        <strain>COL</strain>
    </source>
</reference>